<evidence type="ECO:0000250" key="1">
    <source>
        <dbReference type="UniProtKB" id="G4SW86"/>
    </source>
</evidence>
<evidence type="ECO:0000255" key="2"/>
<evidence type="ECO:0000305" key="3"/>
<accession>Q01447</accession>
<reference key="1">
    <citation type="submission" date="1995-12" db="EMBL/GenBank/DDBJ databases">
        <authorList>
            <person name="Srinivas G."/>
            <person name="Vanetten H.D."/>
            <person name="Kasbekar D.P."/>
        </authorList>
    </citation>
    <scope>NUCLEOTIDE SEQUENCE [GENOMIC DNA]</scope>
    <source>
        <strain>MP VI</strain>
    </source>
</reference>
<proteinExistence type="inferred from homology"/>
<organism>
    <name type="scientific">Fusarium vanettenii</name>
    <name type="common">Neocosmospora pisi</name>
    <dbReference type="NCBI Taxonomy" id="2747968"/>
    <lineage>
        <taxon>Eukaryota</taxon>
        <taxon>Fungi</taxon>
        <taxon>Dikarya</taxon>
        <taxon>Ascomycota</taxon>
        <taxon>Pezizomycotina</taxon>
        <taxon>Sordariomycetes</taxon>
        <taxon>Hypocreomycetidae</taxon>
        <taxon>Hypocreales</taxon>
        <taxon>Nectriaceae</taxon>
        <taxon>Fusarium</taxon>
        <taxon>Fusarium solani species complex</taxon>
    </lineage>
</organism>
<keyword id="KW-0444">Lipid biosynthesis</keyword>
<keyword id="KW-0443">Lipid metabolism</keyword>
<keyword id="KW-0472">Membrane</keyword>
<keyword id="KW-0521">NADP</keyword>
<keyword id="KW-0560">Oxidoreductase</keyword>
<keyword id="KW-0752">Steroid biosynthesis</keyword>
<keyword id="KW-0753">Steroid metabolism</keyword>
<keyword id="KW-0756">Sterol biosynthesis</keyword>
<keyword id="KW-1207">Sterol metabolism</keyword>
<keyword id="KW-0812">Transmembrane</keyword>
<keyword id="KW-1133">Transmembrane helix</keyword>
<protein>
    <recommendedName>
        <fullName>Delta(14)-sterol reductase</fullName>
        <ecNumber>1.3.1.70</ecNumber>
    </recommendedName>
    <alternativeName>
        <fullName>C-14 sterol reductase</fullName>
    </alternativeName>
    <alternativeName>
        <fullName>Sterol C14-reductase</fullName>
    </alternativeName>
</protein>
<dbReference type="EC" id="1.3.1.70"/>
<dbReference type="EMBL" id="X94315">
    <property type="protein sequence ID" value="CAA63976.1"/>
    <property type="molecule type" value="Genomic_DNA"/>
</dbReference>
<dbReference type="SMR" id="Q01447"/>
<dbReference type="VEuPathDB" id="FungiDB:NECHADRAFT_100268"/>
<dbReference type="UniPathway" id="UPA00770">
    <property type="reaction ID" value="UER00755"/>
</dbReference>
<dbReference type="GO" id="GO:0005789">
    <property type="term" value="C:endoplasmic reticulum membrane"/>
    <property type="evidence" value="ECO:0007669"/>
    <property type="project" value="TreeGrafter"/>
</dbReference>
<dbReference type="GO" id="GO:0050613">
    <property type="term" value="F:Delta14-sterol reductase activity"/>
    <property type="evidence" value="ECO:0007669"/>
    <property type="project" value="UniProtKB-EC"/>
</dbReference>
<dbReference type="GO" id="GO:0050661">
    <property type="term" value="F:NADP binding"/>
    <property type="evidence" value="ECO:0000250"/>
    <property type="project" value="UniProtKB"/>
</dbReference>
<dbReference type="GO" id="GO:0006696">
    <property type="term" value="P:ergosterol biosynthetic process"/>
    <property type="evidence" value="ECO:0007669"/>
    <property type="project" value="TreeGrafter"/>
</dbReference>
<dbReference type="Gene3D" id="1.20.120.1630">
    <property type="match status" value="1"/>
</dbReference>
<dbReference type="InterPro" id="IPR001171">
    <property type="entry name" value="ERG24_DHCR-like"/>
</dbReference>
<dbReference type="InterPro" id="IPR018083">
    <property type="entry name" value="Sterol_reductase_CS"/>
</dbReference>
<dbReference type="PANTHER" id="PTHR21257">
    <property type="entry name" value="DELTA(14)-STEROL REDUCTASE"/>
    <property type="match status" value="1"/>
</dbReference>
<dbReference type="PANTHER" id="PTHR21257:SF52">
    <property type="entry name" value="DELTA(14)-STEROL REDUCTASE TM7SF2"/>
    <property type="match status" value="1"/>
</dbReference>
<dbReference type="Pfam" id="PF01222">
    <property type="entry name" value="ERG4_ERG24"/>
    <property type="match status" value="1"/>
</dbReference>
<dbReference type="PROSITE" id="PS01017">
    <property type="entry name" value="STEROL_REDUCT_1"/>
    <property type="match status" value="1"/>
</dbReference>
<dbReference type="PROSITE" id="PS01018">
    <property type="entry name" value="STEROL_REDUCT_2"/>
    <property type="match status" value="1"/>
</dbReference>
<feature type="chain" id="PRO_0000207496" description="Delta(14)-sterol reductase">
    <location>
        <begin position="1"/>
        <end position="485"/>
    </location>
</feature>
<feature type="transmembrane region" description="Helical" evidence="2">
    <location>
        <begin position="18"/>
        <end position="38"/>
    </location>
</feature>
<feature type="transmembrane region" description="Helical" evidence="2">
    <location>
        <begin position="77"/>
        <end position="97"/>
    </location>
</feature>
<feature type="transmembrane region" description="Helical" evidence="2">
    <location>
        <begin position="131"/>
        <end position="151"/>
    </location>
</feature>
<feature type="transmembrane region" description="Helical" evidence="2">
    <location>
        <begin position="155"/>
        <end position="175"/>
    </location>
</feature>
<feature type="transmembrane region" description="Helical" evidence="2">
    <location>
        <begin position="319"/>
        <end position="339"/>
    </location>
</feature>
<feature type="transmembrane region" description="Helical" evidence="2">
    <location>
        <begin position="431"/>
        <end position="451"/>
    </location>
</feature>
<feature type="binding site" evidence="1">
    <location>
        <position position="346"/>
    </location>
    <ligand>
        <name>NADP(+)</name>
        <dbReference type="ChEBI" id="CHEBI:58349"/>
    </ligand>
</feature>
<feature type="binding site" evidence="1">
    <location>
        <position position="350"/>
    </location>
    <ligand>
        <name>NADP(+)</name>
        <dbReference type="ChEBI" id="CHEBI:58349"/>
    </ligand>
</feature>
<feature type="binding site" evidence="1">
    <location>
        <position position="373"/>
    </location>
    <ligand>
        <name>NADP(+)</name>
        <dbReference type="ChEBI" id="CHEBI:58349"/>
    </ligand>
</feature>
<feature type="binding site" evidence="1">
    <location>
        <position position="378"/>
    </location>
    <ligand>
        <name>NADP(+)</name>
        <dbReference type="ChEBI" id="CHEBI:58349"/>
    </ligand>
</feature>
<feature type="binding site" evidence="1">
    <location>
        <begin position="385"/>
        <end position="386"/>
    </location>
    <ligand>
        <name>NADP(+)</name>
        <dbReference type="ChEBI" id="CHEBI:58349"/>
    </ligand>
</feature>
<feature type="binding site" evidence="1">
    <location>
        <position position="457"/>
    </location>
    <ligand>
        <name>NADP(+)</name>
        <dbReference type="ChEBI" id="CHEBI:58349"/>
    </ligand>
</feature>
<feature type="binding site" evidence="1">
    <location>
        <begin position="461"/>
        <end position="465"/>
    </location>
    <ligand>
        <name>NADP(+)</name>
        <dbReference type="ChEBI" id="CHEBI:58349"/>
    </ligand>
</feature>
<feature type="binding site" evidence="1">
    <location>
        <position position="472"/>
    </location>
    <ligand>
        <name>NADP(+)</name>
        <dbReference type="ChEBI" id="CHEBI:58349"/>
    </ligand>
</feature>
<name>ERG24_FUSVN</name>
<comment type="function">
    <text>Reduces the C14=C15 double bond of 4,4-dimethyl-cholesta-8,14,24-trienol to produce 4,4-dimethyl-cholesta-8,24-dienol.</text>
</comment>
<comment type="catalytic activity">
    <reaction>
        <text>4,4-dimethyl-5alpha-cholesta-8,24-dien-3beta-ol + NADP(+) = 4,4-dimethyl-5alpha-cholesta-8,14,24-trien-3beta-ol + NADPH + H(+)</text>
        <dbReference type="Rhea" id="RHEA:18561"/>
        <dbReference type="ChEBI" id="CHEBI:15378"/>
        <dbReference type="ChEBI" id="CHEBI:17813"/>
        <dbReference type="ChEBI" id="CHEBI:18364"/>
        <dbReference type="ChEBI" id="CHEBI:57783"/>
        <dbReference type="ChEBI" id="CHEBI:58349"/>
        <dbReference type="EC" id="1.3.1.70"/>
    </reaction>
</comment>
<comment type="pathway">
    <text>Steroid biosynthesis; zymosterol biosynthesis; zymosterol from lanosterol: step 2/6.</text>
</comment>
<comment type="subcellular location">
    <subcellularLocation>
        <location evidence="3">Membrane</location>
        <topology evidence="3">Multi-pass membrane protein</topology>
    </subcellularLocation>
</comment>
<comment type="similarity">
    <text evidence="3">Belongs to the ERG4/ERG24 family.</text>
</comment>
<sequence length="485" mass="54597">MALKSSKAVSEEQHGYEFFGPPGAFAISFLLPVLVYVFNFVCNDISGCPAPSLLSPKTLSLDKLKQEVGWPQDGFAGLVSWEASAATAGYILLSLILYRVLPAHEVEGTELRSGGRLKYRLNTLYSSSFTLAILAAGTAAQGAEFPVWTFISDNFIQILTANTIFSYAVATFVYVRSFSVKPGNKENRELAAGGHTGNMLYDWFIGRELNPRVVIPLIGEVDLKEWLELRPGMMGWIIFNCSWCAQQYRNYGYVTDSSICITLVQAVYVFDSWWNEPAILTTMDITTDGFGMMLAFGDIVWVPFVYSLQTRYLAVHPVSLGPVGLAVMLSLIGLGFYIFRSANSEKNNFRTNPNDPKVSQLKYIQTKKGSKLLISGWWGIARHINYLGDWIQSWPYCLPTGLAGYQILNAGAQAEGALVMRDGREVVQGEAKGWGMLITYFYILYFAILLIHRERRDDDKCHRKYGEDWEKYRKIVRYRIIPGIY</sequence>